<reference key="1">
    <citation type="journal article" date="1985" name="J. Biol. Chem.">
        <title>Organization of a type I keratin gene. Evidence for evolution of intermediate filaments from a common ancestral gene.</title>
        <authorList>
            <person name="Krieg T.M."/>
            <person name="Schafer M.P."/>
            <person name="Cheng C.K."/>
            <person name="Filpula D."/>
            <person name="Flaherty P."/>
            <person name="Steinert P.M."/>
            <person name="Roop D.R."/>
        </authorList>
    </citation>
    <scope>NUCLEOTIDE SEQUENCE [GENOMIC DNA] (ISOFORM 1)</scope>
</reference>
<reference key="2">
    <citation type="journal article" date="1983" name="Nature">
        <title>Complete amino acid sequence of a mouse epidermal keratin subunit and implications for the structure of intermediate filaments.</title>
        <authorList>
            <person name="Steinert P.M."/>
            <person name="Rice R.H."/>
            <person name="Roop D.R."/>
            <person name="Trus B.L."/>
            <person name="Steven A.C."/>
        </authorList>
    </citation>
    <scope>NUCLEOTIDE SEQUENCE [MRNA] (ISOFORM 1)</scope>
</reference>
<reference key="3">
    <citation type="journal article" date="2005" name="Science">
        <title>The transcriptional landscape of the mammalian genome.</title>
        <authorList>
            <person name="Carninci P."/>
            <person name="Kasukawa T."/>
            <person name="Katayama S."/>
            <person name="Gough J."/>
            <person name="Frith M.C."/>
            <person name="Maeda N."/>
            <person name="Oyama R."/>
            <person name="Ravasi T."/>
            <person name="Lenhard B."/>
            <person name="Wells C."/>
            <person name="Kodzius R."/>
            <person name="Shimokawa K."/>
            <person name="Bajic V.B."/>
            <person name="Brenner S.E."/>
            <person name="Batalov S."/>
            <person name="Forrest A.R."/>
            <person name="Zavolan M."/>
            <person name="Davis M.J."/>
            <person name="Wilming L.G."/>
            <person name="Aidinis V."/>
            <person name="Allen J.E."/>
            <person name="Ambesi-Impiombato A."/>
            <person name="Apweiler R."/>
            <person name="Aturaliya R.N."/>
            <person name="Bailey T.L."/>
            <person name="Bansal M."/>
            <person name="Baxter L."/>
            <person name="Beisel K.W."/>
            <person name="Bersano T."/>
            <person name="Bono H."/>
            <person name="Chalk A.M."/>
            <person name="Chiu K.P."/>
            <person name="Choudhary V."/>
            <person name="Christoffels A."/>
            <person name="Clutterbuck D.R."/>
            <person name="Crowe M.L."/>
            <person name="Dalla E."/>
            <person name="Dalrymple B.P."/>
            <person name="de Bono B."/>
            <person name="Della Gatta G."/>
            <person name="di Bernardo D."/>
            <person name="Down T."/>
            <person name="Engstrom P."/>
            <person name="Fagiolini M."/>
            <person name="Faulkner G."/>
            <person name="Fletcher C.F."/>
            <person name="Fukushima T."/>
            <person name="Furuno M."/>
            <person name="Futaki S."/>
            <person name="Gariboldi M."/>
            <person name="Georgii-Hemming P."/>
            <person name="Gingeras T.R."/>
            <person name="Gojobori T."/>
            <person name="Green R.E."/>
            <person name="Gustincich S."/>
            <person name="Harbers M."/>
            <person name="Hayashi Y."/>
            <person name="Hensch T.K."/>
            <person name="Hirokawa N."/>
            <person name="Hill D."/>
            <person name="Huminiecki L."/>
            <person name="Iacono M."/>
            <person name="Ikeo K."/>
            <person name="Iwama A."/>
            <person name="Ishikawa T."/>
            <person name="Jakt M."/>
            <person name="Kanapin A."/>
            <person name="Katoh M."/>
            <person name="Kawasawa Y."/>
            <person name="Kelso J."/>
            <person name="Kitamura H."/>
            <person name="Kitano H."/>
            <person name="Kollias G."/>
            <person name="Krishnan S.P."/>
            <person name="Kruger A."/>
            <person name="Kummerfeld S.K."/>
            <person name="Kurochkin I.V."/>
            <person name="Lareau L.F."/>
            <person name="Lazarevic D."/>
            <person name="Lipovich L."/>
            <person name="Liu J."/>
            <person name="Liuni S."/>
            <person name="McWilliam S."/>
            <person name="Madan Babu M."/>
            <person name="Madera M."/>
            <person name="Marchionni L."/>
            <person name="Matsuda H."/>
            <person name="Matsuzawa S."/>
            <person name="Miki H."/>
            <person name="Mignone F."/>
            <person name="Miyake S."/>
            <person name="Morris K."/>
            <person name="Mottagui-Tabar S."/>
            <person name="Mulder N."/>
            <person name="Nakano N."/>
            <person name="Nakauchi H."/>
            <person name="Ng P."/>
            <person name="Nilsson R."/>
            <person name="Nishiguchi S."/>
            <person name="Nishikawa S."/>
            <person name="Nori F."/>
            <person name="Ohara O."/>
            <person name="Okazaki Y."/>
            <person name="Orlando V."/>
            <person name="Pang K.C."/>
            <person name="Pavan W.J."/>
            <person name="Pavesi G."/>
            <person name="Pesole G."/>
            <person name="Petrovsky N."/>
            <person name="Piazza S."/>
            <person name="Reed J."/>
            <person name="Reid J.F."/>
            <person name="Ring B.Z."/>
            <person name="Ringwald M."/>
            <person name="Rost B."/>
            <person name="Ruan Y."/>
            <person name="Salzberg S.L."/>
            <person name="Sandelin A."/>
            <person name="Schneider C."/>
            <person name="Schoenbach C."/>
            <person name="Sekiguchi K."/>
            <person name="Semple C.A."/>
            <person name="Seno S."/>
            <person name="Sessa L."/>
            <person name="Sheng Y."/>
            <person name="Shibata Y."/>
            <person name="Shimada H."/>
            <person name="Shimada K."/>
            <person name="Silva D."/>
            <person name="Sinclair B."/>
            <person name="Sperling S."/>
            <person name="Stupka E."/>
            <person name="Sugiura K."/>
            <person name="Sultana R."/>
            <person name="Takenaka Y."/>
            <person name="Taki K."/>
            <person name="Tammoja K."/>
            <person name="Tan S.L."/>
            <person name="Tang S."/>
            <person name="Taylor M.S."/>
            <person name="Tegner J."/>
            <person name="Teichmann S.A."/>
            <person name="Ueda H.R."/>
            <person name="van Nimwegen E."/>
            <person name="Verardo R."/>
            <person name="Wei C.L."/>
            <person name="Yagi K."/>
            <person name="Yamanishi H."/>
            <person name="Zabarovsky E."/>
            <person name="Zhu S."/>
            <person name="Zimmer A."/>
            <person name="Hide W."/>
            <person name="Bult C."/>
            <person name="Grimmond S.M."/>
            <person name="Teasdale R.D."/>
            <person name="Liu E.T."/>
            <person name="Brusic V."/>
            <person name="Quackenbush J."/>
            <person name="Wahlestedt C."/>
            <person name="Mattick J.S."/>
            <person name="Hume D.A."/>
            <person name="Kai C."/>
            <person name="Sasaki D."/>
            <person name="Tomaru Y."/>
            <person name="Fukuda S."/>
            <person name="Kanamori-Katayama M."/>
            <person name="Suzuki M."/>
            <person name="Aoki J."/>
            <person name="Arakawa T."/>
            <person name="Iida J."/>
            <person name="Imamura K."/>
            <person name="Itoh M."/>
            <person name="Kato T."/>
            <person name="Kawaji H."/>
            <person name="Kawagashira N."/>
            <person name="Kawashima T."/>
            <person name="Kojima M."/>
            <person name="Kondo S."/>
            <person name="Konno H."/>
            <person name="Nakano K."/>
            <person name="Ninomiya N."/>
            <person name="Nishio T."/>
            <person name="Okada M."/>
            <person name="Plessy C."/>
            <person name="Shibata K."/>
            <person name="Shiraki T."/>
            <person name="Suzuki S."/>
            <person name="Tagami M."/>
            <person name="Waki K."/>
            <person name="Watahiki A."/>
            <person name="Okamura-Oho Y."/>
            <person name="Suzuki H."/>
            <person name="Kawai J."/>
            <person name="Hayashizaki Y."/>
        </authorList>
    </citation>
    <scope>NUCLEOTIDE SEQUENCE [LARGE SCALE MRNA] (ISOFORMS 2 AND 3)</scope>
    <source>
        <strain>C57BL/6J</strain>
        <tissue>Head</tissue>
    </source>
</reference>
<reference key="4">
    <citation type="submission" date="2000-03" db="EMBL/GenBank/DDBJ databases">
        <authorList>
            <person name="Reichelt J."/>
            <person name="Magin T.M."/>
        </authorList>
    </citation>
    <scope>NUCLEOTIDE SEQUENCE [GENOMIC DNA] OF 1-341 (ISOFORMS 2/3)</scope>
    <source>
        <strain>129/SvJ</strain>
        <tissue>Liver</tissue>
    </source>
</reference>
<reference key="5">
    <citation type="journal article" date="2001" name="Mol. Biol. Cell">
        <title>Complete cytolysis and neonatal lethality in keratin 5 knockout mice reveal its fundamental role in skin integrity and in epidermolysis bullosa simplex.</title>
        <authorList>
            <person name="Peters B."/>
            <person name="Kirfel J."/>
            <person name="Bussow H."/>
            <person name="Vidal M."/>
            <person name="Magin T.M."/>
        </authorList>
    </citation>
    <scope>DEVELOPMENTAL STAGE</scope>
</reference>
<reference key="6">
    <citation type="submission" date="2009-01" db="UniProtKB">
        <authorList>
            <person name="Lubec G."/>
            <person name="Sunyer B."/>
            <person name="Chen W.-Q."/>
        </authorList>
    </citation>
    <scope>PROTEIN SEQUENCE OF 146-154; 164-175; 227-233; 244-254; 361-367; 385-397 AND 440-448</scope>
    <scope>IDENTIFICATION BY MASS SPECTROMETRY</scope>
    <source>
        <strain>OF1</strain>
        <tissue>Hippocampus</tissue>
    </source>
</reference>
<reference key="7">
    <citation type="journal article" date="2004" name="J. Biol. Chem.">
        <title>Clumping factor B, a fibrinogen-binding MSCRAMM (microbial surface components recognizing adhesive matrix molecules) adhesin of Staphylococcus aureus, also binds to the tail region of type I cytokeratin 10.</title>
        <authorList>
            <person name="Walsh E.J."/>
            <person name="O'Brien L.M."/>
            <person name="Liang X."/>
            <person name="Hoeoek M."/>
            <person name="Foster T.J."/>
        </authorList>
    </citation>
    <scope>FUNCTION (MICROBIAL INFECTION)</scope>
    <scope>INTERACTION WITH STAPHYLOCOCCUS AUREUS CLFB (MICROBIAL INFECTION)</scope>
</reference>
<reference key="8">
    <citation type="journal article" date="2009" name="Mol. Microbiol.">
        <title>The Streptococcus pneumoniae adhesin PsrP binds to keratin 10 on lung cells.</title>
        <authorList>
            <person name="Shivshankar P."/>
            <person name="Sanchez C."/>
            <person name="Rose L.F."/>
            <person name="Orihuela C.J."/>
        </authorList>
    </citation>
    <scope>FUNCTION (MICROBIAL INFECTION)</scope>
    <scope>INTERACTION WITH S.PNEUMONIAE PSRP (MICROBIAL INFECTION)</scope>
    <scope>SUBCELLULAR LOCATION</scope>
    <scope>TISSUE SPECIFICITY</scope>
</reference>
<reference key="9">
    <citation type="journal article" date="2010" name="Cell">
        <title>A tissue-specific atlas of mouse protein phosphorylation and expression.</title>
        <authorList>
            <person name="Huttlin E.L."/>
            <person name="Jedrychowski M.P."/>
            <person name="Elias J.E."/>
            <person name="Goswami T."/>
            <person name="Rad R."/>
            <person name="Beausoleil S.A."/>
            <person name="Villen J."/>
            <person name="Haas W."/>
            <person name="Sowa M.E."/>
            <person name="Gygi S.P."/>
        </authorList>
    </citation>
    <scope>PHOSPHORYLATION [LARGE SCALE ANALYSIS] AT SER-34 AND SER-48</scope>
    <scope>IDENTIFICATION BY MASS SPECTROMETRY [LARGE SCALE ANALYSIS]</scope>
    <source>
        <tissue>Brain</tissue>
        <tissue>Brown adipose tissue</tissue>
        <tissue>Heart</tissue>
        <tissue>Kidney</tissue>
        <tissue>Liver</tissue>
        <tissue>Lung</tissue>
        <tissue>Pancreas</tissue>
        <tissue>Spleen</tissue>
        <tissue>Testis</tissue>
    </source>
</reference>
<reference key="10">
    <citation type="journal article" date="2014" name="J. Invest. Dermatol.">
        <title>Loss of keratin K2 expression causes aberrant aggregation of K10, hyperkeratosis, and inflammation.</title>
        <authorList>
            <person name="Fischer H."/>
            <person name="Langbein L."/>
            <person name="Reichelt J."/>
            <person name="Praetzel-Wunder S."/>
            <person name="Buchberger M."/>
            <person name="Ghannadan M."/>
            <person name="Tschachler E."/>
            <person name="Eckhart L."/>
        </authorList>
    </citation>
    <scope>FUNCTION</scope>
    <scope>SUBCELLULAR LOCATION</scope>
    <scope>TISSUE SPECIFICITY</scope>
    <scope>DISRUPTION PHENOTYPE</scope>
</reference>
<reference key="11">
    <citation type="journal article" date="2014" name="J. Invest. Dermatol.">
        <title>Interaction of plectin with keratins 5 and 14: dependence on several plectin domains and keratin quaternary structure.</title>
        <authorList>
            <person name="Bouameur J.E."/>
            <person name="Favre B."/>
            <person name="Fontao L."/>
            <person name="Lingasamy P."/>
            <person name="Begre N."/>
            <person name="Borradori L."/>
        </authorList>
    </citation>
    <scope>IDENTIFICATION IN A COMPLEX WITH KRT1</scope>
    <scope>INTERACTION WITH KRT1 AND PLEC</scope>
</reference>
<reference key="12">
    <citation type="journal article" date="2014" name="Mol. Cell. Proteomics">
        <title>Immunoaffinity enrichment and mass spectrometry analysis of protein methylation.</title>
        <authorList>
            <person name="Guo A."/>
            <person name="Gu H."/>
            <person name="Zhou J."/>
            <person name="Mulhern D."/>
            <person name="Wang Y."/>
            <person name="Lee K.A."/>
            <person name="Yang V."/>
            <person name="Aguiar M."/>
            <person name="Kornhauser J."/>
            <person name="Jia X."/>
            <person name="Ren J."/>
            <person name="Beausoleil S.A."/>
            <person name="Silva J.C."/>
            <person name="Vemulapalli V."/>
            <person name="Bedford M.T."/>
            <person name="Comb M.J."/>
        </authorList>
    </citation>
    <scope>METHYLATION [LARGE SCALE ANALYSIS] AT ARG-32</scope>
    <scope>IDENTIFICATION BY MASS SPECTROMETRY [LARGE SCALE ANALYSIS]</scope>
    <source>
        <tissue>Brain</tissue>
        <tissue>Embryo</tissue>
    </source>
</reference>
<reference key="13">
    <citation type="journal article" date="2016" name="J. Dermatol. Sci.">
        <title>Keratins K2 and K10 are essential for the epidermal integrity of plantar skin.</title>
        <authorList>
            <person name="Fischer H."/>
            <person name="Langbein L."/>
            <person name="Reichelt J."/>
            <person name="Buchberger M."/>
            <person name="Tschachler E."/>
            <person name="Eckhart L."/>
        </authorList>
    </citation>
    <scope>FUNCTION</scope>
    <scope>TISSUE SPECIFICITY</scope>
    <scope>DISRUPTION PHENOTYPE</scope>
</reference>
<dbReference type="EMBL" id="L00193">
    <property type="protein sequence ID" value="AAA39391.1"/>
    <property type="molecule type" value="Genomic_DNA"/>
</dbReference>
<dbReference type="EMBL" id="M10081">
    <property type="protein sequence ID" value="AAA39391.1"/>
    <property type="status" value="JOINED"/>
    <property type="molecule type" value="Genomic_DNA"/>
</dbReference>
<dbReference type="EMBL" id="V00830">
    <property type="protein sequence ID" value="CAA24214.1"/>
    <property type="molecule type" value="mRNA"/>
</dbReference>
<dbReference type="EMBL" id="AK014360">
    <property type="protein sequence ID" value="BAB29296.1"/>
    <property type="status" value="ALT_FRAME"/>
    <property type="molecule type" value="mRNA"/>
</dbReference>
<dbReference type="EMBL" id="AK076508">
    <property type="protein sequence ID" value="BAC36371.1"/>
    <property type="molecule type" value="mRNA"/>
</dbReference>
<dbReference type="EMBL" id="AK081402">
    <property type="protein sequence ID" value="BAC38210.1"/>
    <property type="molecule type" value="mRNA"/>
</dbReference>
<dbReference type="EMBL" id="AK081914">
    <property type="protein sequence ID" value="BAC38369.1"/>
    <property type="molecule type" value="mRNA"/>
</dbReference>
<dbReference type="EMBL" id="AF245658">
    <property type="protein sequence ID" value="AAF65456.1"/>
    <property type="molecule type" value="Genomic_DNA"/>
</dbReference>
<dbReference type="CCDS" id="CCDS25380.1">
    <molecule id="P02535-2"/>
</dbReference>
<dbReference type="PIR" id="A02940">
    <property type="entry name" value="KRMSE1"/>
</dbReference>
<dbReference type="PIR" id="S07330">
    <property type="entry name" value="S07330"/>
</dbReference>
<dbReference type="RefSeq" id="NP_034790.2">
    <property type="nucleotide sequence ID" value="NM_010660.2"/>
</dbReference>
<dbReference type="SMR" id="P02535"/>
<dbReference type="BioGRID" id="201017">
    <property type="interactions" value="16"/>
</dbReference>
<dbReference type="ComplexPortal" id="CPX-5871">
    <property type="entry name" value="Keratin-1 - Keratin-10 dimer complex"/>
</dbReference>
<dbReference type="FunCoup" id="P02535">
    <property type="interactions" value="145"/>
</dbReference>
<dbReference type="IntAct" id="P02535">
    <property type="interactions" value="1"/>
</dbReference>
<dbReference type="STRING" id="10090.ENSMUSP00000099420"/>
<dbReference type="GlyGen" id="P02535">
    <property type="glycosylation" value="2 sites, 1 O-linked glycan (1 site)"/>
</dbReference>
<dbReference type="iPTMnet" id="P02535"/>
<dbReference type="PhosphoSitePlus" id="P02535"/>
<dbReference type="SwissPalm" id="P02535"/>
<dbReference type="CPTAC" id="non-CPTAC-3987"/>
<dbReference type="jPOST" id="P02535"/>
<dbReference type="PaxDb" id="10090-ENSMUSP00000099420"/>
<dbReference type="ProteomicsDB" id="268932">
    <molecule id="P02535-1"/>
</dbReference>
<dbReference type="ProteomicsDB" id="268933">
    <molecule id="P02535-2"/>
</dbReference>
<dbReference type="ProteomicsDB" id="268934">
    <molecule id="P02535-3"/>
</dbReference>
<dbReference type="DNASU" id="16661"/>
<dbReference type="GeneID" id="16661"/>
<dbReference type="KEGG" id="mmu:16661"/>
<dbReference type="AGR" id="MGI:96685"/>
<dbReference type="CTD" id="3858"/>
<dbReference type="MGI" id="MGI:96685">
    <property type="gene designation" value="Krt10"/>
</dbReference>
<dbReference type="eggNOG" id="ENOG502QTM6">
    <property type="taxonomic scope" value="Eukaryota"/>
</dbReference>
<dbReference type="InParanoid" id="P02535"/>
<dbReference type="OrthoDB" id="2441647at2759"/>
<dbReference type="PhylomeDB" id="P02535"/>
<dbReference type="Reactome" id="R-MMU-6805567">
    <property type="pathway name" value="Keratinization"/>
</dbReference>
<dbReference type="Reactome" id="R-MMU-6809371">
    <property type="pathway name" value="Formation of the cornified envelope"/>
</dbReference>
<dbReference type="BioGRID-ORCS" id="16661">
    <property type="hits" value="1 hit in 77 CRISPR screens"/>
</dbReference>
<dbReference type="ChiTaRS" id="Krt10">
    <property type="organism name" value="mouse"/>
</dbReference>
<dbReference type="PRO" id="PR:P02535"/>
<dbReference type="Proteomes" id="UP000000589">
    <property type="component" value="Unplaced"/>
</dbReference>
<dbReference type="RNAct" id="P02535">
    <property type="molecule type" value="protein"/>
</dbReference>
<dbReference type="GO" id="GO:0009986">
    <property type="term" value="C:cell surface"/>
    <property type="evidence" value="ECO:0007669"/>
    <property type="project" value="UniProtKB-SubCell"/>
</dbReference>
<dbReference type="GO" id="GO:0001533">
    <property type="term" value="C:cornified envelope"/>
    <property type="evidence" value="ECO:0000314"/>
    <property type="project" value="MGI"/>
</dbReference>
<dbReference type="GO" id="GO:0005737">
    <property type="term" value="C:cytoplasm"/>
    <property type="evidence" value="ECO:0000314"/>
    <property type="project" value="UniProtKB"/>
</dbReference>
<dbReference type="GO" id="GO:0005576">
    <property type="term" value="C:extracellular region"/>
    <property type="evidence" value="ECO:0007669"/>
    <property type="project" value="UniProtKB-SubCell"/>
</dbReference>
<dbReference type="GO" id="GO:0045095">
    <property type="term" value="C:keratin filament"/>
    <property type="evidence" value="ECO:0000314"/>
    <property type="project" value="MGI"/>
</dbReference>
<dbReference type="GO" id="GO:0008092">
    <property type="term" value="F:cytoskeletal protein binding"/>
    <property type="evidence" value="ECO:0000316"/>
    <property type="project" value="MGI"/>
</dbReference>
<dbReference type="GO" id="GO:0046982">
    <property type="term" value="F:protein heterodimerization activity"/>
    <property type="evidence" value="ECO:0000250"/>
    <property type="project" value="UniProtKB"/>
</dbReference>
<dbReference type="GO" id="GO:0005198">
    <property type="term" value="F:structural molecule activity"/>
    <property type="evidence" value="ECO:0007669"/>
    <property type="project" value="InterPro"/>
</dbReference>
<dbReference type="GO" id="GO:0071277">
    <property type="term" value="P:cellular response to calcium ion"/>
    <property type="evidence" value="ECO:0000314"/>
    <property type="project" value="MGI"/>
</dbReference>
<dbReference type="GO" id="GO:0008544">
    <property type="term" value="P:epidermis development"/>
    <property type="evidence" value="ECO:0000316"/>
    <property type="project" value="MGI"/>
</dbReference>
<dbReference type="GO" id="GO:0045109">
    <property type="term" value="P:intermediate filament organization"/>
    <property type="evidence" value="ECO:0000316"/>
    <property type="project" value="MGI"/>
</dbReference>
<dbReference type="GO" id="GO:0003334">
    <property type="term" value="P:keratinocyte development"/>
    <property type="evidence" value="ECO:0000316"/>
    <property type="project" value="MGI"/>
</dbReference>
<dbReference type="GO" id="GO:0030216">
    <property type="term" value="P:keratinocyte differentiation"/>
    <property type="evidence" value="ECO:0000314"/>
    <property type="project" value="MGI"/>
</dbReference>
<dbReference type="GO" id="GO:0045684">
    <property type="term" value="P:positive regulation of epidermis development"/>
    <property type="evidence" value="ECO:0000315"/>
    <property type="project" value="UniProtKB"/>
</dbReference>
<dbReference type="GO" id="GO:0051290">
    <property type="term" value="P:protein heterotetramerization"/>
    <property type="evidence" value="ECO:0000250"/>
    <property type="project" value="UniProtKB"/>
</dbReference>
<dbReference type="GO" id="GO:0048863">
    <property type="term" value="P:stem cell differentiation"/>
    <property type="evidence" value="ECO:0000314"/>
    <property type="project" value="MGI"/>
</dbReference>
<dbReference type="FunFam" id="1.20.5.1160:FF:000002">
    <property type="entry name" value="Type I keratin 10"/>
    <property type="match status" value="1"/>
</dbReference>
<dbReference type="FunFam" id="1.20.5.170:FF:000002">
    <property type="entry name" value="Type I keratin KA11"/>
    <property type="match status" value="1"/>
</dbReference>
<dbReference type="FunFam" id="1.20.5.500:FF:000001">
    <property type="entry name" value="Type II keratin 23"/>
    <property type="match status" value="1"/>
</dbReference>
<dbReference type="Gene3D" id="1.20.5.170">
    <property type="match status" value="1"/>
</dbReference>
<dbReference type="Gene3D" id="1.20.5.500">
    <property type="entry name" value="Single helix bin"/>
    <property type="match status" value="1"/>
</dbReference>
<dbReference type="Gene3D" id="1.20.5.1160">
    <property type="entry name" value="Vasodilator-stimulated phosphoprotein"/>
    <property type="match status" value="1"/>
</dbReference>
<dbReference type="InterPro" id="IPR018039">
    <property type="entry name" value="IF_conserved"/>
</dbReference>
<dbReference type="InterPro" id="IPR039008">
    <property type="entry name" value="IF_rod_dom"/>
</dbReference>
<dbReference type="InterPro" id="IPR002957">
    <property type="entry name" value="Keratin_I"/>
</dbReference>
<dbReference type="PANTHER" id="PTHR23239">
    <property type="entry name" value="INTERMEDIATE FILAMENT"/>
    <property type="match status" value="1"/>
</dbReference>
<dbReference type="PANTHER" id="PTHR23239:SF137">
    <property type="entry name" value="KERATIN, TYPE I CYTOSKELETAL 10"/>
    <property type="match status" value="1"/>
</dbReference>
<dbReference type="Pfam" id="PF00038">
    <property type="entry name" value="Filament"/>
    <property type="match status" value="1"/>
</dbReference>
<dbReference type="PRINTS" id="PR01248">
    <property type="entry name" value="TYPE1KERATIN"/>
</dbReference>
<dbReference type="SMART" id="SM01391">
    <property type="entry name" value="Filament"/>
    <property type="match status" value="1"/>
</dbReference>
<dbReference type="SUPFAM" id="SSF64593">
    <property type="entry name" value="Intermediate filament protein, coiled coil region"/>
    <property type="match status" value="2"/>
</dbReference>
<dbReference type="PROSITE" id="PS00226">
    <property type="entry name" value="IF_ROD_1"/>
    <property type="match status" value="1"/>
</dbReference>
<dbReference type="PROSITE" id="PS51842">
    <property type="entry name" value="IF_ROD_2"/>
    <property type="match status" value="1"/>
</dbReference>
<keyword id="KW-0025">Alternative splicing</keyword>
<keyword id="KW-0175">Coiled coil</keyword>
<keyword id="KW-0963">Cytoplasm</keyword>
<keyword id="KW-0903">Direct protein sequencing</keyword>
<keyword id="KW-1015">Disulfide bond</keyword>
<keyword id="KW-0403">Intermediate filament</keyword>
<keyword id="KW-0416">Keratin</keyword>
<keyword id="KW-0488">Methylation</keyword>
<keyword id="KW-0597">Phosphoprotein</keyword>
<keyword id="KW-1185">Reference proteome</keyword>
<keyword id="KW-0964">Secreted</keyword>
<sequence>MSVLYSSSSKQFSSSRSGGGGGGGSVRVSSTRGSLGGGYSSGGFSGGSFSRGSSGGGCFGGSSGGYGGFGGGGSFGGGYGGSSFGGGYGGSSFGGGYGGSSFGGAGFGGGGSFGGGSFGGGSYGGGFGGGGFGGDGGSLLSGNGRVTMQNLNDRLASYMDKVRALEESNYELEGKIKEWYEKHGNSSQREPRDYSKYYKTIEDLKGQILTLTTDNANVLLQIDNARLAADDFRLKYENEVTLRQSVEADINGLRRVLDELTLSKSDLEMQIESLNEELAYLKKNHEEEMRDLQNVSTGDVNVEMNAAPGVDLTQLLNNMRNQYEQLAEKNRKDAEEWFNQKSKELTTEIDSNIEQMSSHKSEITELRRTVQGLEIELQSQLALKQSLEASLAETEGRYCVQLSQIQSQISALEEQLQQIRAETECQNAEYQQLLDIKTRLENEIQTYRSLLEGEGSSSGGGGGRRGGSGGGSYGGSSGGGSYGGSSGGGGSYGGSSGGGGSYGGGSSGGGSHGGSSGGGYGGGSSSGGAGGHGGSSGGGYGGGSSSGGQGGSGGFKSSGGGDQSSKGPRY</sequence>
<organism>
    <name type="scientific">Mus musculus</name>
    <name type="common">Mouse</name>
    <dbReference type="NCBI Taxonomy" id="10090"/>
    <lineage>
        <taxon>Eukaryota</taxon>
        <taxon>Metazoa</taxon>
        <taxon>Chordata</taxon>
        <taxon>Craniata</taxon>
        <taxon>Vertebrata</taxon>
        <taxon>Euteleostomi</taxon>
        <taxon>Mammalia</taxon>
        <taxon>Eutheria</taxon>
        <taxon>Euarchontoglires</taxon>
        <taxon>Glires</taxon>
        <taxon>Rodentia</taxon>
        <taxon>Myomorpha</taxon>
        <taxon>Muroidea</taxon>
        <taxon>Muridae</taxon>
        <taxon>Murinae</taxon>
        <taxon>Mus</taxon>
        <taxon>Mus</taxon>
    </lineage>
</organism>
<protein>
    <recommendedName>
        <fullName>Keratin, type I cytoskeletal 10</fullName>
    </recommendedName>
    <alternativeName>
        <fullName>56 kDa cytokeratin</fullName>
    </alternativeName>
    <alternativeName>
        <fullName>Cytokeratin-10</fullName>
        <shortName>CK-10</shortName>
    </alternativeName>
    <alternativeName>
        <fullName>Keratin, type I cytoskeletal 59 kDa</fullName>
    </alternativeName>
    <alternativeName>
        <fullName>Keratin-10</fullName>
        <shortName>K10</shortName>
    </alternativeName>
</protein>
<accession>P02535</accession>
<accession>P08731</accession>
<accession>Q8BUX3</accession>
<accession>Q8BV09</accession>
<accession>Q8BVU3</accession>
<accession>Q9CXH6</accession>
<accession>Q9JKB4</accession>
<gene>
    <name type="primary">Krt10</name>
    <name type="synonym">Krt1-10</name>
</gene>
<evidence type="ECO:0000250" key="1">
    <source>
        <dbReference type="UniProtKB" id="P13645"/>
    </source>
</evidence>
<evidence type="ECO:0000255" key="2">
    <source>
        <dbReference type="PROSITE-ProRule" id="PRU01188"/>
    </source>
</evidence>
<evidence type="ECO:0000256" key="3">
    <source>
        <dbReference type="SAM" id="MobiDB-lite"/>
    </source>
</evidence>
<evidence type="ECO:0000269" key="4">
    <source>
    </source>
</evidence>
<evidence type="ECO:0000269" key="5">
    <source>
    </source>
</evidence>
<evidence type="ECO:0000269" key="6">
    <source>
    </source>
</evidence>
<evidence type="ECO:0000269" key="7">
    <source>
    </source>
</evidence>
<evidence type="ECO:0000269" key="8">
    <source>
    </source>
</evidence>
<evidence type="ECO:0000269" key="9">
    <source>
    </source>
</evidence>
<evidence type="ECO:0000303" key="10">
    <source>
    </source>
</evidence>
<evidence type="ECO:0000305" key="11"/>
<evidence type="ECO:0007744" key="12">
    <source>
    </source>
</evidence>
<evidence type="ECO:0007744" key="13">
    <source>
    </source>
</evidence>
<comment type="function">
    <text evidence="7 9">Plays a role in the establishment of the epidermal barrier on plantar skin (PubMed:26603179). Involved in the maintenance of cell layer development and keratin filament bundles in suprabasal cells of the epithelium (PubMed:24751727).</text>
</comment>
<comment type="function">
    <text evidence="5">(Microbial infection) Acts as a mediator of S.aureus adherence to desquamated nasal epithelial cells via clfB, and hence may play a role in nasal colonization.</text>
</comment>
<comment type="function">
    <text evidence="6">(Microbial infection) Binds S.pneumoniae PsrP, mediating adherence of the bacteria to lung cell lines.</text>
</comment>
<comment type="subunit">
    <text evidence="5">(Microbial infection) Interacts (via C-terminal tail domain) with the S.aureus clumping factor, clfB; this interaction probably mediates S.aureus attachment to the highly keratinized squamous epithelial cells from the nasal cavity.</text>
</comment>
<comment type="subunit">
    <text evidence="1 8">Heterotetramer of two type I and two type II keratins. Heterodimer with KRT1 (PubMed:24940650). Two heterodimers of KRT1 and KRT10 form a heterotetramer (By similarity). The KRT10 subunit in the heterotetramer is probably disulfide-linked (By similarity). Interacts with PLEC isoform 1C, when in a heterodimer with KRT1 (PubMed:24940650).</text>
</comment>
<comment type="subunit">
    <text evidence="6">(Microbial infection) Interacts (via the C-terminal tail domain) with S.pneumoniae serine-rich repeat protein PsrP; this interaction probably mediates S.pneumoniae adherence to lung tissue and subsequent pathogenesis.</text>
</comment>
<comment type="interaction">
    <interactant intactId="EBI-646288">
        <id>P02535</id>
    </interactant>
    <interactant intactId="EBI-646260">
        <id>Q60680-1</id>
        <label>Chuk</label>
    </interactant>
    <organismsDiffer>false</organismsDiffer>
    <experiments>6</experiments>
</comment>
<comment type="subcellular location">
    <subcellularLocation>
        <location evidence="1">Secreted</location>
        <location evidence="1">Extracellular space</location>
    </subcellularLocation>
    <subcellularLocation>
        <location evidence="6">Cell surface</location>
    </subcellularLocation>
    <subcellularLocation>
        <location evidence="7">Cytoplasm</location>
    </subcellularLocation>
</comment>
<comment type="alternative products">
    <event type="alternative splicing"/>
    <isoform>
        <id>P02535-1</id>
        <name>1</name>
        <sequence type="displayed"/>
    </isoform>
    <isoform>
        <id>P02535-2</id>
        <name>2</name>
        <sequence type="described" ref="VSP_021100 VSP_021101"/>
    </isoform>
    <isoform>
        <id>P02535-3</id>
        <name>3</name>
        <sequence type="described" ref="VSP_021100 VSP_021101 VSP_021102 VSP_021103"/>
    </isoform>
</comment>
<comment type="tissue specificity">
    <text evidence="6 7 9">Expressed in the suprabasal layers of the epidermis throughout the entire sole (at protein level) (PubMed:24751727, PubMed:26603179). Expressed in the infundibular regions of the ear, the interscale regions of the tail, and the interfollicular epidermis of the back (PubMed:24751727). Expressed in lung tissue from young mice (at protein level) (PubMed:19627498).</text>
</comment>
<comment type="developmental stage">
    <text evidence="4">Expressed in the skin at birth.</text>
</comment>
<comment type="disruption phenotype">
    <text evidence="7 9">Mice are viable and display no differences in size and body weight (PubMed:26603179). Show acanthosis, hyperkeratosis and scaling of the stratum corneum in plantar skin (PubMed:26603179). Increase in the number of epidermal cell layers and a decrease in the abundance of cytoplasmic keratin filament bundles in suprabasal cells (PubMed:24751727). Large keratohyalin granules of various shapes are evident in the upper suprabasal cells (PubMed:24751727). KRT2 aggregates form in the cytoplasm of keratinocytes (PubMed:24751727). Show no epidermal aberrations of the footpads (PubMed:26603179). Double knockout mice of KRT10 and KRT2 are viable and display no differences in size and body weight (PubMed:26603179). Show a more severe epidermis phenotype as in single KRT10 knockout mice (PubMed:24751727, PubMed:26603179).</text>
</comment>
<comment type="miscellaneous">
    <text>There are two types of cytoskeletal and microfibrillar keratin: I (acidic; 40-55 kDa) and II (neutral to basic; 56-70 kDa).</text>
</comment>
<comment type="similarity">
    <text evidence="2">Belongs to the intermediate filament family.</text>
</comment>
<comment type="sequence caution" evidence="11">
    <conflict type="frameshift">
        <sequence resource="EMBL-CDS" id="BAB29296"/>
    </conflict>
</comment>
<feature type="chain" id="PRO_0000063643" description="Keratin, type I cytoskeletal 10">
    <location>
        <begin position="1"/>
        <end position="570"/>
    </location>
</feature>
<feature type="domain" description="IF rod" evidence="2">
    <location>
        <begin position="144"/>
        <end position="458"/>
    </location>
</feature>
<feature type="region of interest" description="Head">
    <location>
        <begin position="1"/>
        <end position="143"/>
    </location>
</feature>
<feature type="region of interest" description="Disordered" evidence="3">
    <location>
        <begin position="1"/>
        <end position="29"/>
    </location>
</feature>
<feature type="region of interest" description="Coil 1A">
    <location>
        <begin position="144"/>
        <end position="179"/>
    </location>
</feature>
<feature type="region of interest" description="Linker 1">
    <location>
        <begin position="180"/>
        <end position="200"/>
    </location>
</feature>
<feature type="region of interest" description="Coil 1B">
    <location>
        <begin position="201"/>
        <end position="292"/>
    </location>
</feature>
<feature type="region of interest" description="Linker 12">
    <location>
        <begin position="293"/>
        <end position="315"/>
    </location>
</feature>
<feature type="region of interest" description="Coil 2">
    <location>
        <begin position="316"/>
        <end position="454"/>
    </location>
</feature>
<feature type="region of interest" description="Disordered" evidence="3">
    <location>
        <begin position="451"/>
        <end position="570"/>
    </location>
</feature>
<feature type="region of interest" description="Tail">
    <location>
        <begin position="455"/>
        <end position="570"/>
    </location>
</feature>
<feature type="compositionally biased region" description="Low complexity" evidence="3">
    <location>
        <begin position="1"/>
        <end position="16"/>
    </location>
</feature>
<feature type="compositionally biased region" description="Gly residues" evidence="3">
    <location>
        <begin position="456"/>
        <end position="562"/>
    </location>
</feature>
<feature type="site" description="Stutter">
    <location>
        <position position="396"/>
    </location>
</feature>
<feature type="modified residue" description="Phosphoserine" evidence="1">
    <location>
        <position position="15"/>
    </location>
</feature>
<feature type="modified residue" description="Phosphoserine" evidence="1">
    <location>
        <position position="17"/>
    </location>
</feature>
<feature type="modified residue" description="Asymmetric dimethylarginine; alternate" evidence="13">
    <location>
        <position position="32"/>
    </location>
</feature>
<feature type="modified residue" description="Omega-N-methylarginine; alternate" evidence="13">
    <location>
        <position position="32"/>
    </location>
</feature>
<feature type="modified residue" description="Phosphoserine" evidence="12">
    <location>
        <position position="34"/>
    </location>
</feature>
<feature type="modified residue" description="Phosphoserine" evidence="1">
    <location>
        <position position="45"/>
    </location>
</feature>
<feature type="modified residue" description="Phosphoserine" evidence="12">
    <location>
        <position position="48"/>
    </location>
</feature>
<feature type="modified residue" description="Phosphoserine" evidence="1">
    <location>
        <position position="168"/>
    </location>
</feature>
<feature type="disulfide bond" description="Interchain" evidence="1">
    <location>
        <position position="399"/>
    </location>
</feature>
<feature type="splice variant" id="VSP_021100" description="In isoform 2 and isoform 3." evidence="10">
    <original>YGGSSFGGAG</original>
    <variation>S</variation>
    <location>
        <begin position="97"/>
        <end position="106"/>
    </location>
</feature>
<feature type="splice variant" id="VSP_021101" description="In isoform 2 and isoform 3." evidence="10">
    <original>GR</original>
    <variation>EK</variation>
    <location>
        <begin position="144"/>
        <end position="145"/>
    </location>
</feature>
<feature type="splice variant" id="VSP_021102" description="In isoform 3." evidence="10">
    <original>RGGSGGG</original>
    <variation>PRRQPRR</variation>
    <location>
        <begin position="465"/>
        <end position="471"/>
    </location>
</feature>
<feature type="splice variant" id="VSP_021103" description="In isoform 3." evidence="10">
    <location>
        <begin position="472"/>
        <end position="570"/>
    </location>
</feature>
<feature type="sequence conflict" description="In Ref. 4; AAF65456." evidence="11" ref="4">
    <original>L</original>
    <variation>R</variation>
    <location>
        <position position="4"/>
    </location>
</feature>
<feature type="sequence conflict" description="In Ref. 2; CAA24214." evidence="11" ref="2">
    <original>S</original>
    <variation>C</variation>
    <location>
        <position position="6"/>
    </location>
</feature>
<feature type="sequence conflict" description="In Ref. 4." evidence="11" ref="4">
    <original>G</original>
    <variation>GGG</variation>
    <location>
        <position position="23"/>
    </location>
</feature>
<feature type="sequence conflict" description="In Ref. 2; CAA24214." evidence="11" ref="2">
    <original>S</original>
    <variation>F</variation>
    <location>
        <position position="25"/>
    </location>
</feature>
<feature type="sequence conflict" description="In Ref. 2; CAA24214." evidence="11" ref="2">
    <original>S</original>
    <variation>F</variation>
    <location>
        <position position="29"/>
    </location>
</feature>
<feature type="sequence conflict" description="In Ref. 2; CAA24214." evidence="11" ref="2">
    <original>Y</original>
    <variation>L</variation>
    <location>
        <position position="39"/>
    </location>
</feature>
<feature type="sequence conflict" description="In Ref. 1; AAA39391." evidence="11" ref="1">
    <original>G</original>
    <variation>E</variation>
    <location>
        <position position="42"/>
    </location>
</feature>
<feature type="sequence conflict" description="In Ref. 3; BAB29296." evidence="11" ref="3">
    <original>G</original>
    <variation>R</variation>
    <location>
        <position position="46"/>
    </location>
</feature>
<feature type="sequence conflict" description="In Ref. 3; BAB29296." evidence="11" ref="3">
    <original>G</original>
    <variation>V</variation>
    <location>
        <position position="94"/>
    </location>
</feature>
<feature type="sequence conflict" description="In Ref. 2; CAA24214." evidence="11" ref="2">
    <original>AG</original>
    <variation>GS</variation>
    <location>
        <begin position="105"/>
        <end position="106"/>
    </location>
</feature>
<feature type="sequence conflict" description="In Ref. 2." evidence="11" ref="2">
    <location>
        <position position="111"/>
    </location>
</feature>
<feature type="sequence conflict" description="In Ref. 2; CAA24214." evidence="11" ref="2">
    <original>SY</original>
    <variation>GC</variation>
    <location>
        <begin position="122"/>
        <end position="123"/>
    </location>
</feature>
<feature type="sequence conflict" description="In Ref. 2; CAA24214." evidence="11" ref="2">
    <original>S</original>
    <variation>G</variation>
    <location>
        <position position="138"/>
    </location>
</feature>
<feature type="sequence conflict" description="In Ref. 2; CAA24214." evidence="11" ref="2">
    <original>Q</original>
    <variation>R</variation>
    <location>
        <position position="149"/>
    </location>
</feature>
<feature type="sequence conflict" description="In Ref. 2; CAA24214." evidence="11" ref="2">
    <original>WYEKHGNSSQ</original>
    <variation>VVREARQLKP</variation>
    <location>
        <begin position="179"/>
        <end position="188"/>
    </location>
</feature>
<feature type="sequence conflict" description="In Ref. 2; CAA24214." evidence="11" ref="2">
    <original>KSDLEM</original>
    <variation>QSVLEL</variation>
    <location>
        <begin position="264"/>
        <end position="269"/>
    </location>
</feature>
<feature type="sequence conflict" description="In Ref. 3; BAC38210." evidence="11" ref="3">
    <original>E</original>
    <variation>G</variation>
    <location>
        <position position="277"/>
    </location>
</feature>
<feature type="sequence conflict" description="In Ref. 2; CAA24214." evidence="11" ref="2">
    <original>H</original>
    <variation>L</variation>
    <location>
        <position position="285"/>
    </location>
</feature>
<feature type="sequence conflict" description="In Ref. 2; CAA24214." evidence="11" ref="2">
    <original>E</original>
    <variation>A</variation>
    <location>
        <position position="354"/>
    </location>
</feature>
<feature type="sequence conflict" description="In Ref. 2; CAA24214." evidence="11" ref="2">
    <original>EGRYCV</original>
    <variation>VESLLR</variation>
    <location>
        <begin position="395"/>
        <end position="400"/>
    </location>
</feature>
<feature type="sequence conflict" description="In Ref. 3; BAB29296/BAC36371/BAC38210." evidence="11" ref="3">
    <original>R</original>
    <variation>G</variation>
    <location>
        <position position="465"/>
    </location>
</feature>
<feature type="sequence conflict" description="In Ref. 3; BAB29296." evidence="11" ref="3">
    <original>GG</original>
    <variation>AD</variation>
    <location>
        <begin position="466"/>
        <end position="467"/>
    </location>
</feature>
<feature type="sequence conflict" description="In Ref. 3; BAB29296/BAC36371/BAC38210." evidence="11" ref="3">
    <original>G</original>
    <variation>H</variation>
    <location>
        <position position="469"/>
    </location>
</feature>
<feature type="sequence conflict" description="In Ref. 2; CAA24214." evidence="11" ref="2">
    <original>GGSHGGS</original>
    <variation>CGGRGGG</variation>
    <location>
        <begin position="509"/>
        <end position="515"/>
    </location>
</feature>
<feature type="sequence conflict" description="In Ref. 2; CAA24214." evidence="11" ref="2">
    <original>S</original>
    <variation>G</variation>
    <location>
        <position position="524"/>
    </location>
</feature>
<feature type="sequence conflict" description="In Ref. 2; CAA24214." evidence="11" ref="2">
    <original>H</original>
    <variation>R</variation>
    <location>
        <position position="532"/>
    </location>
</feature>
<feature type="sequence conflict" description="In Ref. 2; CAA24214." evidence="11" ref="2">
    <original>S</original>
    <variation>G</variation>
    <location>
        <position position="535"/>
    </location>
</feature>
<feature type="sequence conflict" description="In Ref. 2; CAA24214." evidence="11" ref="2">
    <original>S</original>
    <variation>G</variation>
    <location>
        <position position="544"/>
    </location>
</feature>
<feature type="sequence conflict" description="In Ref. 2; CAA24214." evidence="11" ref="2">
    <original>GQ</original>
    <variation>RR</variation>
    <location>
        <begin position="548"/>
        <end position="549"/>
    </location>
</feature>
<feature type="sequence conflict" description="In Ref. 2; CAA24214." evidence="11" ref="2">
    <original>KS</original>
    <variation>SGT</variation>
    <location>
        <begin position="556"/>
        <end position="557"/>
    </location>
</feature>
<proteinExistence type="evidence at protein level"/>
<name>K1C10_MOUSE</name>